<name>GSA_ACIC1</name>
<comment type="catalytic activity">
    <reaction evidence="1">
        <text>(S)-4-amino-5-oxopentanoate = 5-aminolevulinate</text>
        <dbReference type="Rhea" id="RHEA:14265"/>
        <dbReference type="ChEBI" id="CHEBI:57501"/>
        <dbReference type="ChEBI" id="CHEBI:356416"/>
        <dbReference type="EC" id="5.4.3.8"/>
    </reaction>
</comment>
<comment type="cofactor">
    <cofactor evidence="1">
        <name>pyridoxal 5'-phosphate</name>
        <dbReference type="ChEBI" id="CHEBI:597326"/>
    </cofactor>
</comment>
<comment type="pathway">
    <text evidence="1">Porphyrin-containing compound metabolism; protoporphyrin-IX biosynthesis; 5-aminolevulinate from L-glutamyl-tRNA(Glu): step 2/2.</text>
</comment>
<comment type="subunit">
    <text evidence="1">Homodimer.</text>
</comment>
<comment type="subcellular location">
    <subcellularLocation>
        <location evidence="1">Cytoplasm</location>
    </subcellularLocation>
</comment>
<comment type="similarity">
    <text evidence="1">Belongs to the class-III pyridoxal-phosphate-dependent aminotransferase family. HemL subfamily.</text>
</comment>
<keyword id="KW-0963">Cytoplasm</keyword>
<keyword id="KW-0413">Isomerase</keyword>
<keyword id="KW-0627">Porphyrin biosynthesis</keyword>
<keyword id="KW-0663">Pyridoxal phosphate</keyword>
<keyword id="KW-1185">Reference proteome</keyword>
<proteinExistence type="inferred from homology"/>
<dbReference type="EC" id="5.4.3.8" evidence="1"/>
<dbReference type="EMBL" id="CP000481">
    <property type="protein sequence ID" value="ABK52005.1"/>
    <property type="molecule type" value="Genomic_DNA"/>
</dbReference>
<dbReference type="RefSeq" id="WP_011719069.1">
    <property type="nucleotide sequence ID" value="NC_008578.1"/>
</dbReference>
<dbReference type="SMR" id="A0LRE5"/>
<dbReference type="FunCoup" id="A0LRE5">
    <property type="interactions" value="285"/>
</dbReference>
<dbReference type="STRING" id="351607.Acel_0231"/>
<dbReference type="KEGG" id="ace:Acel_0231"/>
<dbReference type="eggNOG" id="COG0001">
    <property type="taxonomic scope" value="Bacteria"/>
</dbReference>
<dbReference type="HOGENOM" id="CLU_016922_1_5_11"/>
<dbReference type="InParanoid" id="A0LRE5"/>
<dbReference type="OrthoDB" id="9801052at2"/>
<dbReference type="UniPathway" id="UPA00251">
    <property type="reaction ID" value="UER00317"/>
</dbReference>
<dbReference type="Proteomes" id="UP000008221">
    <property type="component" value="Chromosome"/>
</dbReference>
<dbReference type="GO" id="GO:0005737">
    <property type="term" value="C:cytoplasm"/>
    <property type="evidence" value="ECO:0007669"/>
    <property type="project" value="UniProtKB-SubCell"/>
</dbReference>
<dbReference type="GO" id="GO:0042286">
    <property type="term" value="F:glutamate-1-semialdehyde 2,1-aminomutase activity"/>
    <property type="evidence" value="ECO:0007669"/>
    <property type="project" value="UniProtKB-UniRule"/>
</dbReference>
<dbReference type="GO" id="GO:0030170">
    <property type="term" value="F:pyridoxal phosphate binding"/>
    <property type="evidence" value="ECO:0007669"/>
    <property type="project" value="InterPro"/>
</dbReference>
<dbReference type="GO" id="GO:0008483">
    <property type="term" value="F:transaminase activity"/>
    <property type="evidence" value="ECO:0007669"/>
    <property type="project" value="InterPro"/>
</dbReference>
<dbReference type="GO" id="GO:0006782">
    <property type="term" value="P:protoporphyrinogen IX biosynthetic process"/>
    <property type="evidence" value="ECO:0007669"/>
    <property type="project" value="UniProtKB-UniRule"/>
</dbReference>
<dbReference type="CDD" id="cd00610">
    <property type="entry name" value="OAT_like"/>
    <property type="match status" value="1"/>
</dbReference>
<dbReference type="FunFam" id="3.40.640.10:FF:000021">
    <property type="entry name" value="Glutamate-1-semialdehyde 2,1-aminomutase"/>
    <property type="match status" value="1"/>
</dbReference>
<dbReference type="Gene3D" id="3.90.1150.10">
    <property type="entry name" value="Aspartate Aminotransferase, domain 1"/>
    <property type="match status" value="1"/>
</dbReference>
<dbReference type="Gene3D" id="3.40.640.10">
    <property type="entry name" value="Type I PLP-dependent aspartate aminotransferase-like (Major domain)"/>
    <property type="match status" value="1"/>
</dbReference>
<dbReference type="HAMAP" id="MF_00375">
    <property type="entry name" value="HemL_aminotrans_3"/>
    <property type="match status" value="1"/>
</dbReference>
<dbReference type="InterPro" id="IPR004639">
    <property type="entry name" value="4pyrrol_synth_GluAld_NH2Trfase"/>
</dbReference>
<dbReference type="InterPro" id="IPR005814">
    <property type="entry name" value="Aminotrans_3"/>
</dbReference>
<dbReference type="InterPro" id="IPR049704">
    <property type="entry name" value="Aminotrans_3_PPA_site"/>
</dbReference>
<dbReference type="InterPro" id="IPR015424">
    <property type="entry name" value="PyrdxlP-dep_Trfase"/>
</dbReference>
<dbReference type="InterPro" id="IPR015421">
    <property type="entry name" value="PyrdxlP-dep_Trfase_major"/>
</dbReference>
<dbReference type="InterPro" id="IPR015422">
    <property type="entry name" value="PyrdxlP-dep_Trfase_small"/>
</dbReference>
<dbReference type="NCBIfam" id="TIGR00713">
    <property type="entry name" value="hemL"/>
    <property type="match status" value="1"/>
</dbReference>
<dbReference type="NCBIfam" id="NF000818">
    <property type="entry name" value="PRK00062.1"/>
    <property type="match status" value="1"/>
</dbReference>
<dbReference type="PANTHER" id="PTHR43713">
    <property type="entry name" value="GLUTAMATE-1-SEMIALDEHYDE 2,1-AMINOMUTASE"/>
    <property type="match status" value="1"/>
</dbReference>
<dbReference type="PANTHER" id="PTHR43713:SF3">
    <property type="entry name" value="GLUTAMATE-1-SEMIALDEHYDE 2,1-AMINOMUTASE 1, CHLOROPLASTIC-RELATED"/>
    <property type="match status" value="1"/>
</dbReference>
<dbReference type="Pfam" id="PF00202">
    <property type="entry name" value="Aminotran_3"/>
    <property type="match status" value="1"/>
</dbReference>
<dbReference type="SUPFAM" id="SSF53383">
    <property type="entry name" value="PLP-dependent transferases"/>
    <property type="match status" value="1"/>
</dbReference>
<dbReference type="PROSITE" id="PS00600">
    <property type="entry name" value="AA_TRANSFER_CLASS_3"/>
    <property type="match status" value="1"/>
</dbReference>
<sequence length="437" mass="45713">MTSPGTDAVSAACFERARARIPGGVNSPVRAFRAVGGTPRFIQSGAGPYLVDVDGNRYVDLVCSWGPLILGHAHPAVVAAVKQAAERGTSFGAPTEAEIEMAEEIARRVPAVEMIRLVNSGTEATMSALRLARAYTNRPLVVKFAGCYHGHVDALLSAAGSGVATLGLPGTPGVTPGQAAETIVLPYNDIDAVRTAFERYGGEIACVIVEAAAANMGVVPPEPGFNRALADIAHENGALLVLDEVLTGFRVSSAGWWGRDPVAADLFTFGKVIGGGLPIGAFGGRRDIMQLLAPAGTVYQAGTLSGNPVAVAAGLATLRESTPDIYARLDHVAAVLARALRDEFGRIGLPHQVQQAGNLFSVFFTTEPVRNYAQATGQEAWRYPPFFHALLDRGVHPPPSVYEAWFVSAAHDDAAVNQILDALPAAVRAAADARPPG</sequence>
<accession>A0LRE5</accession>
<protein>
    <recommendedName>
        <fullName evidence="1">Glutamate-1-semialdehyde 2,1-aminomutase</fullName>
        <shortName evidence="1">GSA</shortName>
        <ecNumber evidence="1">5.4.3.8</ecNumber>
    </recommendedName>
    <alternativeName>
        <fullName evidence="1">Glutamate-1-semialdehyde aminotransferase</fullName>
        <shortName evidence="1">GSA-AT</shortName>
    </alternativeName>
</protein>
<feature type="chain" id="PRO_0000300886" description="Glutamate-1-semialdehyde 2,1-aminomutase">
    <location>
        <begin position="1"/>
        <end position="437"/>
    </location>
</feature>
<feature type="modified residue" description="N6-(pyridoxal phosphate)lysine" evidence="1">
    <location>
        <position position="271"/>
    </location>
</feature>
<evidence type="ECO:0000255" key="1">
    <source>
        <dbReference type="HAMAP-Rule" id="MF_00375"/>
    </source>
</evidence>
<organism>
    <name type="scientific">Acidothermus cellulolyticus (strain ATCC 43068 / DSM 8971 / 11B)</name>
    <dbReference type="NCBI Taxonomy" id="351607"/>
    <lineage>
        <taxon>Bacteria</taxon>
        <taxon>Bacillati</taxon>
        <taxon>Actinomycetota</taxon>
        <taxon>Actinomycetes</taxon>
        <taxon>Acidothermales</taxon>
        <taxon>Acidothermaceae</taxon>
        <taxon>Acidothermus</taxon>
    </lineage>
</organism>
<gene>
    <name evidence="1" type="primary">hemL</name>
    <name type="ordered locus">Acel_0231</name>
</gene>
<reference key="1">
    <citation type="journal article" date="2009" name="Genome Res.">
        <title>Complete genome of the cellulolytic thermophile Acidothermus cellulolyticus 11B provides insights into its ecophysiological and evolutionary adaptations.</title>
        <authorList>
            <person name="Barabote R.D."/>
            <person name="Xie G."/>
            <person name="Leu D.H."/>
            <person name="Normand P."/>
            <person name="Necsulea A."/>
            <person name="Daubin V."/>
            <person name="Medigue C."/>
            <person name="Adney W.S."/>
            <person name="Xu X.C."/>
            <person name="Lapidus A."/>
            <person name="Parales R.E."/>
            <person name="Detter C."/>
            <person name="Pujic P."/>
            <person name="Bruce D."/>
            <person name="Lavire C."/>
            <person name="Challacombe J.F."/>
            <person name="Brettin T.S."/>
            <person name="Berry A.M."/>
        </authorList>
    </citation>
    <scope>NUCLEOTIDE SEQUENCE [LARGE SCALE GENOMIC DNA]</scope>
    <source>
        <strain>ATCC 43068 / DSM 8971 / 11B</strain>
    </source>
</reference>